<reference key="1">
    <citation type="submission" date="2008-02" db="EMBL/GenBank/DDBJ databases">
        <title>Complete sequence of Pseudomonas putida W619.</title>
        <authorList>
            <person name="Copeland A."/>
            <person name="Lucas S."/>
            <person name="Lapidus A."/>
            <person name="Barry K."/>
            <person name="Detter J.C."/>
            <person name="Glavina del Rio T."/>
            <person name="Dalin E."/>
            <person name="Tice H."/>
            <person name="Pitluck S."/>
            <person name="Chain P."/>
            <person name="Malfatti S."/>
            <person name="Shin M."/>
            <person name="Vergez L."/>
            <person name="Schmutz J."/>
            <person name="Larimer F."/>
            <person name="Land M."/>
            <person name="Hauser L."/>
            <person name="Kyrpides N."/>
            <person name="Kim E."/>
            <person name="Taghavi S."/>
            <person name="Vangronsveld D."/>
            <person name="van der Lelie D."/>
            <person name="Richardson P."/>
        </authorList>
    </citation>
    <scope>NUCLEOTIDE SEQUENCE [LARGE SCALE GENOMIC DNA]</scope>
    <source>
        <strain>W619</strain>
    </source>
</reference>
<gene>
    <name evidence="1" type="primary">ligB</name>
    <name type="ordered locus">PputW619_0498</name>
</gene>
<accession>B1J2Z7</accession>
<organism>
    <name type="scientific">Pseudomonas putida (strain W619)</name>
    <dbReference type="NCBI Taxonomy" id="390235"/>
    <lineage>
        <taxon>Bacteria</taxon>
        <taxon>Pseudomonadati</taxon>
        <taxon>Pseudomonadota</taxon>
        <taxon>Gammaproteobacteria</taxon>
        <taxon>Pseudomonadales</taxon>
        <taxon>Pseudomonadaceae</taxon>
        <taxon>Pseudomonas</taxon>
    </lineage>
</organism>
<comment type="function">
    <text evidence="1">Catalyzes the formation of phosphodiester linkages between 5'-phosphoryl and 3'-hydroxyl groups in double-stranded DNA using NAD as a coenzyme and as the energy source for the reaction.</text>
</comment>
<comment type="catalytic activity">
    <reaction evidence="1">
        <text>NAD(+) + (deoxyribonucleotide)n-3'-hydroxyl + 5'-phospho-(deoxyribonucleotide)m = (deoxyribonucleotide)n+m + AMP + beta-nicotinamide D-nucleotide.</text>
        <dbReference type="EC" id="6.5.1.2"/>
    </reaction>
</comment>
<comment type="similarity">
    <text evidence="1">Belongs to the NAD-dependent DNA ligase family. LigB subfamily.</text>
</comment>
<protein>
    <recommendedName>
        <fullName evidence="1">DNA ligase B</fullName>
        <ecNumber evidence="1">6.5.1.2</ecNumber>
    </recommendedName>
    <alternativeName>
        <fullName evidence="1">Polydeoxyribonucleotide synthase [NAD(+)] B</fullName>
    </alternativeName>
</protein>
<evidence type="ECO:0000255" key="1">
    <source>
        <dbReference type="HAMAP-Rule" id="MF_01587"/>
    </source>
</evidence>
<keyword id="KW-0227">DNA damage</keyword>
<keyword id="KW-0234">DNA repair</keyword>
<keyword id="KW-0235">DNA replication</keyword>
<keyword id="KW-0436">Ligase</keyword>
<keyword id="KW-0520">NAD</keyword>
<proteinExistence type="inferred from homology"/>
<name>LIGB_PSEPW</name>
<feature type="chain" id="PRO_0000381951" description="DNA ligase B">
    <location>
        <begin position="1"/>
        <end position="567"/>
    </location>
</feature>
<feature type="active site" description="N6-AMP-lysine intermediate" evidence="1">
    <location>
        <position position="126"/>
    </location>
</feature>
<sequence length="567" mass="63067">MSFFLRLAALLLLHTSIAQASHCPDWSTKQARTEVAQLRATLANWDDHYHRQGIALVADELYDQARHHLLHLQQCFGQEFTDPSPLASARGPIAHPVAHTGVEKLHDAAAVARWMTGKKGVWVQPKVDGVAVSLVYRQGRLVQLLSRGDGLQGHDWSRHIKDLDSITRQLPQPLDVVLQGELYLRLQAHVQAEAGSSNVRGTVAGMLARKQLGPEPGASIGLFVWDWPHGPDNQGERLTQLAAWGFPDSQRFSTAIDTPEEATHWRLHWYRSPLPFATDGVILRQDSRPPADRWQPNAPYWIAAWKYPFAQALAEVREVRFLIGRTGKVTPLLRLKPVTLDDRRISQVSLGSLARWRALDIRPGDQVAISLAGLTIPRFDQVVHRAVERQVLPVPEAEQYGQHSCWQASDGCQEQFIARLVWLSGKQGLAMPGTGKGTWKRLVQAGLVTSLTDWLTLDAQQLLSVPGISRKTATQLQRSFDIGRNRPFAQWRKGLGVPAPAQVPRDENWQTLAGRSASDWQTLPGIGATRATQLANFFTHEQVQRIATLLGTRGIDGFHGTDDVGSQ</sequence>
<dbReference type="EC" id="6.5.1.2" evidence="1"/>
<dbReference type="EMBL" id="CP000949">
    <property type="protein sequence ID" value="ACA71003.1"/>
    <property type="molecule type" value="Genomic_DNA"/>
</dbReference>
<dbReference type="SMR" id="B1J2Z7"/>
<dbReference type="STRING" id="390235.PputW619_0498"/>
<dbReference type="KEGG" id="ppw:PputW619_0498"/>
<dbReference type="eggNOG" id="COG0272">
    <property type="taxonomic scope" value="Bacteria"/>
</dbReference>
<dbReference type="HOGENOM" id="CLU_489786_0_0_6"/>
<dbReference type="OrthoDB" id="9759736at2"/>
<dbReference type="GO" id="GO:0003911">
    <property type="term" value="F:DNA ligase (NAD+) activity"/>
    <property type="evidence" value="ECO:0007669"/>
    <property type="project" value="UniProtKB-UniRule"/>
</dbReference>
<dbReference type="GO" id="GO:0006281">
    <property type="term" value="P:DNA repair"/>
    <property type="evidence" value="ECO:0007669"/>
    <property type="project" value="UniProtKB-KW"/>
</dbReference>
<dbReference type="GO" id="GO:0006260">
    <property type="term" value="P:DNA replication"/>
    <property type="evidence" value="ECO:0007669"/>
    <property type="project" value="UniProtKB-KW"/>
</dbReference>
<dbReference type="Gene3D" id="1.10.150.20">
    <property type="entry name" value="5' to 3' exonuclease, C-terminal subdomain"/>
    <property type="match status" value="1"/>
</dbReference>
<dbReference type="Gene3D" id="3.30.470.30">
    <property type="entry name" value="DNA ligase/mRNA capping enzyme"/>
    <property type="match status" value="1"/>
</dbReference>
<dbReference type="Gene3D" id="1.10.287.610">
    <property type="entry name" value="Helix hairpin bin"/>
    <property type="match status" value="1"/>
</dbReference>
<dbReference type="Gene3D" id="2.40.50.140">
    <property type="entry name" value="Nucleic acid-binding proteins"/>
    <property type="match status" value="1"/>
</dbReference>
<dbReference type="HAMAP" id="MF_01587">
    <property type="entry name" value="DNA_ligase_B"/>
    <property type="match status" value="1"/>
</dbReference>
<dbReference type="InterPro" id="IPR020923">
    <property type="entry name" value="DNA_ligase_B"/>
</dbReference>
<dbReference type="InterPro" id="IPR033136">
    <property type="entry name" value="DNA_ligase_CS"/>
</dbReference>
<dbReference type="InterPro" id="IPR013839">
    <property type="entry name" value="DNAligase_adenylation"/>
</dbReference>
<dbReference type="InterPro" id="IPR013840">
    <property type="entry name" value="DNAligase_N"/>
</dbReference>
<dbReference type="InterPro" id="IPR012340">
    <property type="entry name" value="NA-bd_OB-fold"/>
</dbReference>
<dbReference type="InterPro" id="IPR050326">
    <property type="entry name" value="NAD_dep_DNA_ligaseB"/>
</dbReference>
<dbReference type="InterPro" id="IPR004150">
    <property type="entry name" value="NAD_DNA_ligase_OB"/>
</dbReference>
<dbReference type="InterPro" id="IPR010994">
    <property type="entry name" value="RuvA_2-like"/>
</dbReference>
<dbReference type="NCBIfam" id="NF005987">
    <property type="entry name" value="PRK08097.1"/>
    <property type="match status" value="1"/>
</dbReference>
<dbReference type="PANTHER" id="PTHR47810">
    <property type="entry name" value="DNA LIGASE"/>
    <property type="match status" value="1"/>
</dbReference>
<dbReference type="PANTHER" id="PTHR47810:SF1">
    <property type="entry name" value="DNA LIGASE B"/>
    <property type="match status" value="1"/>
</dbReference>
<dbReference type="Pfam" id="PF01653">
    <property type="entry name" value="DNA_ligase_aden"/>
    <property type="match status" value="1"/>
</dbReference>
<dbReference type="Pfam" id="PF03120">
    <property type="entry name" value="DNA_ligase_OB"/>
    <property type="match status" value="1"/>
</dbReference>
<dbReference type="Pfam" id="PF14520">
    <property type="entry name" value="HHH_5"/>
    <property type="match status" value="1"/>
</dbReference>
<dbReference type="SMART" id="SM00532">
    <property type="entry name" value="LIGANc"/>
    <property type="match status" value="1"/>
</dbReference>
<dbReference type="SUPFAM" id="SSF56091">
    <property type="entry name" value="DNA ligase/mRNA capping enzyme, catalytic domain"/>
    <property type="match status" value="1"/>
</dbReference>
<dbReference type="SUPFAM" id="SSF50249">
    <property type="entry name" value="Nucleic acid-binding proteins"/>
    <property type="match status" value="1"/>
</dbReference>
<dbReference type="SUPFAM" id="SSF47781">
    <property type="entry name" value="RuvA domain 2-like"/>
    <property type="match status" value="1"/>
</dbReference>
<dbReference type="PROSITE" id="PS01056">
    <property type="entry name" value="DNA_LIGASE_N2"/>
    <property type="match status" value="1"/>
</dbReference>